<feature type="signal peptide" evidence="2">
    <location>
        <begin position="1"/>
        <end position="19"/>
    </location>
</feature>
<feature type="chain" id="PRO_0000001774" description="Autophagy-related protein 27">
    <location>
        <begin position="20"/>
        <end position="251"/>
    </location>
</feature>
<feature type="topological domain" description="Lumenal" evidence="2">
    <location>
        <begin position="20"/>
        <end position="175"/>
    </location>
</feature>
<feature type="transmembrane region" description="Helical" evidence="2">
    <location>
        <begin position="176"/>
        <end position="196"/>
    </location>
</feature>
<feature type="topological domain" description="Cytoplasmic" evidence="2">
    <location>
        <begin position="197"/>
        <end position="251"/>
    </location>
</feature>
<feature type="domain" description="MRH" evidence="3">
    <location>
        <begin position="20"/>
        <end position="168"/>
    </location>
</feature>
<feature type="disulfide bond" evidence="3">
    <location>
        <begin position="22"/>
        <end position="60"/>
    </location>
</feature>
<feature type="disulfide bond" evidence="3">
    <location>
        <begin position="71"/>
        <end position="78"/>
    </location>
</feature>
<feature type="disulfide bond" evidence="3">
    <location>
        <begin position="134"/>
        <end position="166"/>
    </location>
</feature>
<sequence length="251" mass="27782">MKYVRCVLLTGALFNIAAGLKCADSKVLSRYKVSQHAAKGKFTESTPPSETTDFWWINLCEEHSEPVPDKCKDDAMFCHRQQVKLDDGKEYVTQVFDVPRNQEVDVEELRDGFQVSFTGKWGERERKVKVRYTCADDKAEDEVSAEGAFGAHTTPVEVALRGPSGCIQATEKSSGIGGWITWLVIYAVLLTLIYLLAKSYMSVGHGSMQDFREEFVERSTNLVSSLPEFAKEVMGKVVGGGPSSRGGYSAV</sequence>
<comment type="function">
    <text evidence="1">Effector of VPS34 phosphatidylinositol 3-phosphate kinase signaling. Regulates the cytoplasm to vacuole transport (Cvt) vesicle formation. Plays a role in ATG protein retrieval from the pre-autophagosomal structure (PAS) and is especially required for autophagy-dependent cycling of ATG9 (By similarity).</text>
</comment>
<comment type="subcellular location">
    <subcellularLocation>
        <location evidence="1">Cytoplasmic vesicle membrane</location>
        <topology evidence="1">Single-pass type I membrane protein</topology>
    </subcellularLocation>
    <subcellularLocation>
        <location evidence="1">Golgi apparatus membrane</location>
        <topology evidence="1">Single-pass type I membrane protein</topology>
    </subcellularLocation>
    <subcellularLocation>
        <location evidence="1">Mitochondrion membrane</location>
        <topology evidence="1">Single-pass membrane protein</topology>
    </subcellularLocation>
    <subcellularLocation>
        <location evidence="1">Preautophagosomal structure membrane</location>
        <topology evidence="1">Single-pass type I membrane protein</topology>
    </subcellularLocation>
    <text evidence="1">Cycles among the pre-autophagosomal structure (PAS), mitochondria and Golgi.</text>
</comment>
<comment type="similarity">
    <text evidence="4">Belongs to the ATG27 family.</text>
</comment>
<gene>
    <name type="primary">ATG27</name>
    <name type="ordered locus">AEL138C</name>
</gene>
<name>ATG27_EREGS</name>
<keyword id="KW-0072">Autophagy</keyword>
<keyword id="KW-0968">Cytoplasmic vesicle</keyword>
<keyword id="KW-1015">Disulfide bond</keyword>
<keyword id="KW-0333">Golgi apparatus</keyword>
<keyword id="KW-0472">Membrane</keyword>
<keyword id="KW-0496">Mitochondrion</keyword>
<keyword id="KW-0653">Protein transport</keyword>
<keyword id="KW-1185">Reference proteome</keyword>
<keyword id="KW-0732">Signal</keyword>
<keyword id="KW-0812">Transmembrane</keyword>
<keyword id="KW-1133">Transmembrane helix</keyword>
<keyword id="KW-0813">Transport</keyword>
<protein>
    <recommendedName>
        <fullName>Autophagy-related protein 27</fullName>
    </recommendedName>
</protein>
<evidence type="ECO:0000250" key="1"/>
<evidence type="ECO:0000255" key="2"/>
<evidence type="ECO:0000255" key="3">
    <source>
        <dbReference type="PROSITE-ProRule" id="PRU01262"/>
    </source>
</evidence>
<evidence type="ECO:0000305" key="4"/>
<proteinExistence type="inferred from homology"/>
<dbReference type="EMBL" id="AE016818">
    <property type="protein sequence ID" value="AAS52547.2"/>
    <property type="molecule type" value="Genomic_DNA"/>
</dbReference>
<dbReference type="RefSeq" id="NP_984723.2">
    <property type="nucleotide sequence ID" value="NM_210077.2"/>
</dbReference>
<dbReference type="FunCoup" id="Q757Z8">
    <property type="interactions" value="91"/>
</dbReference>
<dbReference type="STRING" id="284811.Q757Z8"/>
<dbReference type="EnsemblFungi" id="AAS52547">
    <property type="protein sequence ID" value="AAS52547"/>
    <property type="gene ID" value="AGOS_AEL138C"/>
</dbReference>
<dbReference type="GeneID" id="4620910"/>
<dbReference type="KEGG" id="ago:AGOS_AEL138C"/>
<dbReference type="eggNOG" id="ENOG502QVJJ">
    <property type="taxonomic scope" value="Eukaryota"/>
</dbReference>
<dbReference type="HOGENOM" id="CLU_089705_0_0_1"/>
<dbReference type="InParanoid" id="Q757Z8"/>
<dbReference type="OMA" id="NKGNAID"/>
<dbReference type="OrthoDB" id="29460at2759"/>
<dbReference type="Proteomes" id="UP000000591">
    <property type="component" value="Chromosome V"/>
</dbReference>
<dbReference type="GO" id="GO:0030136">
    <property type="term" value="C:clathrin-coated vesicle"/>
    <property type="evidence" value="ECO:0007669"/>
    <property type="project" value="EnsemblFungi"/>
</dbReference>
<dbReference type="GO" id="GO:0030659">
    <property type="term" value="C:cytoplasmic vesicle membrane"/>
    <property type="evidence" value="ECO:0007669"/>
    <property type="project" value="UniProtKB-SubCell"/>
</dbReference>
<dbReference type="GO" id="GO:0000139">
    <property type="term" value="C:Golgi membrane"/>
    <property type="evidence" value="ECO:0007669"/>
    <property type="project" value="UniProtKB-SubCell"/>
</dbReference>
<dbReference type="GO" id="GO:0031966">
    <property type="term" value="C:mitochondrial membrane"/>
    <property type="evidence" value="ECO:0007669"/>
    <property type="project" value="UniProtKB-SubCell"/>
</dbReference>
<dbReference type="GO" id="GO:0034045">
    <property type="term" value="C:phagophore assembly site membrane"/>
    <property type="evidence" value="ECO:0007669"/>
    <property type="project" value="UniProtKB-SubCell"/>
</dbReference>
<dbReference type="GO" id="GO:0005802">
    <property type="term" value="C:trans-Golgi network"/>
    <property type="evidence" value="ECO:0007669"/>
    <property type="project" value="EnsemblFungi"/>
</dbReference>
<dbReference type="GO" id="GO:0005774">
    <property type="term" value="C:vacuolar membrane"/>
    <property type="evidence" value="ECO:0007669"/>
    <property type="project" value="EnsemblFungi"/>
</dbReference>
<dbReference type="GO" id="GO:0032266">
    <property type="term" value="F:phosphatidylinositol-3-phosphate binding"/>
    <property type="evidence" value="ECO:0007669"/>
    <property type="project" value="EnsemblFungi"/>
</dbReference>
<dbReference type="GO" id="GO:0032258">
    <property type="term" value="P:cytoplasm to vacuole targeting by the Cvt pathway"/>
    <property type="evidence" value="ECO:0007669"/>
    <property type="project" value="EnsemblFungi"/>
</dbReference>
<dbReference type="GO" id="GO:0000425">
    <property type="term" value="P:pexophagy"/>
    <property type="evidence" value="ECO:0007669"/>
    <property type="project" value="EnsemblFungi"/>
</dbReference>
<dbReference type="GO" id="GO:0034497">
    <property type="term" value="P:protein localization to phagophore assembly site"/>
    <property type="evidence" value="ECO:0007669"/>
    <property type="project" value="EnsemblFungi"/>
</dbReference>
<dbReference type="GO" id="GO:0016050">
    <property type="term" value="P:vesicle organization"/>
    <property type="evidence" value="ECO:0007669"/>
    <property type="project" value="EnsemblFungi"/>
</dbReference>
<dbReference type="InterPro" id="IPR018939">
    <property type="entry name" value="Autophagy-rel_prot_27"/>
</dbReference>
<dbReference type="InterPro" id="IPR044865">
    <property type="entry name" value="MRH_dom"/>
</dbReference>
<dbReference type="Pfam" id="PF09451">
    <property type="entry name" value="ATG27"/>
    <property type="match status" value="1"/>
</dbReference>
<dbReference type="PROSITE" id="PS51914">
    <property type="entry name" value="MRH"/>
    <property type="match status" value="1"/>
</dbReference>
<accession>Q757Z8</accession>
<organism>
    <name type="scientific">Eremothecium gossypii (strain ATCC 10895 / CBS 109.51 / FGSC 9923 / NRRL Y-1056)</name>
    <name type="common">Yeast</name>
    <name type="synonym">Ashbya gossypii</name>
    <dbReference type="NCBI Taxonomy" id="284811"/>
    <lineage>
        <taxon>Eukaryota</taxon>
        <taxon>Fungi</taxon>
        <taxon>Dikarya</taxon>
        <taxon>Ascomycota</taxon>
        <taxon>Saccharomycotina</taxon>
        <taxon>Saccharomycetes</taxon>
        <taxon>Saccharomycetales</taxon>
        <taxon>Saccharomycetaceae</taxon>
        <taxon>Eremothecium</taxon>
    </lineage>
</organism>
<reference key="1">
    <citation type="journal article" date="2004" name="Science">
        <title>The Ashbya gossypii genome as a tool for mapping the ancient Saccharomyces cerevisiae genome.</title>
        <authorList>
            <person name="Dietrich F.S."/>
            <person name="Voegeli S."/>
            <person name="Brachat S."/>
            <person name="Lerch A."/>
            <person name="Gates K."/>
            <person name="Steiner S."/>
            <person name="Mohr C."/>
            <person name="Poehlmann R."/>
            <person name="Luedi P."/>
            <person name="Choi S."/>
            <person name="Wing R.A."/>
            <person name="Flavier A."/>
            <person name="Gaffney T.D."/>
            <person name="Philippsen P."/>
        </authorList>
    </citation>
    <scope>NUCLEOTIDE SEQUENCE [LARGE SCALE GENOMIC DNA]</scope>
    <source>
        <strain>ATCC 10895 / CBS 109.51 / FGSC 9923 / NRRL Y-1056</strain>
    </source>
</reference>
<reference key="2">
    <citation type="journal article" date="2013" name="G3 (Bethesda)">
        <title>Genomes of Ashbya fungi isolated from insects reveal four mating-type loci, numerous translocations, lack of transposons, and distinct gene duplications.</title>
        <authorList>
            <person name="Dietrich F.S."/>
            <person name="Voegeli S."/>
            <person name="Kuo S."/>
            <person name="Philippsen P."/>
        </authorList>
    </citation>
    <scope>GENOME REANNOTATION</scope>
    <scope>SEQUENCE REVISION TO 237-239; 243-245 AND C-TERMINUS</scope>
    <source>
        <strain>ATCC 10895 / CBS 109.51 / FGSC 9923 / NRRL Y-1056</strain>
    </source>
</reference>